<dbReference type="EMBL" id="HQ414100">
    <property type="protein sequence ID" value="AEJ31978.1"/>
    <property type="molecule type" value="mRNA"/>
</dbReference>
<dbReference type="EMBL" id="JU173668">
    <property type="protein sequence ID" value="AFJ49194.1"/>
    <property type="molecule type" value="mRNA"/>
</dbReference>
<dbReference type="PIR" id="A37909">
    <property type="entry name" value="A37909"/>
</dbReference>
<dbReference type="SMR" id="P24330"/>
<dbReference type="GO" id="GO:0005576">
    <property type="term" value="C:extracellular region"/>
    <property type="evidence" value="ECO:0007669"/>
    <property type="project" value="UniProtKB-SubCell"/>
</dbReference>
<dbReference type="GO" id="GO:0015459">
    <property type="term" value="F:potassium channel regulator activity"/>
    <property type="evidence" value="ECO:0007669"/>
    <property type="project" value="UniProtKB-KW"/>
</dbReference>
<dbReference type="GO" id="GO:0090729">
    <property type="term" value="F:toxin activity"/>
    <property type="evidence" value="ECO:0007669"/>
    <property type="project" value="UniProtKB-KW"/>
</dbReference>
<dbReference type="GO" id="GO:0044564">
    <property type="term" value="P:envenomation resulting in occlusion of the pore of voltage-gated potassium channel in another organism"/>
    <property type="evidence" value="ECO:0000250"/>
    <property type="project" value="UniProtKB"/>
</dbReference>
<dbReference type="FunFam" id="2.20.20.10:FF:000001">
    <property type="entry name" value="Crotamine"/>
    <property type="match status" value="1"/>
</dbReference>
<dbReference type="Gene3D" id="2.20.20.10">
    <property type="entry name" value="Anthopleurin-A"/>
    <property type="match status" value="1"/>
</dbReference>
<dbReference type="InterPro" id="IPR023355">
    <property type="entry name" value="Myo_ane_neurotoxin_sf"/>
</dbReference>
<dbReference type="InterPro" id="IPR000881">
    <property type="entry name" value="Myotoxin"/>
</dbReference>
<dbReference type="Pfam" id="PF00819">
    <property type="entry name" value="Myotoxins"/>
    <property type="match status" value="1"/>
</dbReference>
<dbReference type="PRINTS" id="PR00283">
    <property type="entry name" value="MYOTOXIN"/>
</dbReference>
<dbReference type="SUPFAM" id="SSF57392">
    <property type="entry name" value="Defensin-like"/>
    <property type="match status" value="1"/>
</dbReference>
<dbReference type="PROSITE" id="PS00459">
    <property type="entry name" value="MYOTOXINS_1"/>
    <property type="match status" value="1"/>
</dbReference>
<dbReference type="PROSITE" id="PS51345">
    <property type="entry name" value="MYOTOXINS_2"/>
    <property type="match status" value="1"/>
</dbReference>
<sequence length="70" mass="8017">MKILYLLFAFLFLAFLSEPGNAYKRCHKKGGHCFPKTVICLPPSSDFGKMDCRWRWKCCKKGSVNNAISI</sequence>
<comment type="function">
    <text evidence="2">Cationic peptide that possesses multiple functions. It acts as a cell-penetrating peptide (CPP), and as a potent voltage-gated potassium channel (Kv) inhibitor. It exhibits antimicrobial activities, hind limb paralysis, and severe muscle necrosis by a non-enzymatic mechanism.</text>
</comment>
<comment type="subunit">
    <text evidence="1">Monomer.</text>
</comment>
<comment type="subcellular location">
    <subcellularLocation>
        <location evidence="3">Secreted</location>
    </subcellularLocation>
</comment>
<comment type="tissue specificity">
    <text evidence="6">Expressed by the venom gland.</text>
</comment>
<comment type="toxic dose">
    <text evidence="3">LD(50) is 0.96 mg/kg by subcutaneous injection.</text>
</comment>
<comment type="miscellaneous">
    <text>This myotoxin is the most abundant transcript in the venom of the specimen analyzed in PubMed:23025625.</text>
</comment>
<comment type="miscellaneous">
    <text evidence="7">Individuals of C.adamanteus from populations in southern and central Florida lack this toxin in their venoms.</text>
</comment>
<comment type="similarity">
    <text evidence="5">Belongs to the crotamine-myotoxin family.</text>
</comment>
<protein>
    <recommendedName>
        <fullName>Myotoxin</fullName>
    </recommendedName>
    <alternativeName>
        <fullName>CAM-toxin</fullName>
    </alternativeName>
</protein>
<feature type="signal peptide" evidence="3 4">
    <location>
        <begin position="1"/>
        <end position="22"/>
    </location>
</feature>
<feature type="chain" id="PRO_0000221562" description="Myotoxin" evidence="6">
    <location>
        <begin position="23"/>
        <end position="70"/>
    </location>
</feature>
<feature type="disulfide bond" evidence="2">
    <location>
        <begin position="26"/>
        <end position="58"/>
    </location>
</feature>
<feature type="disulfide bond" evidence="2">
    <location>
        <begin position="33"/>
        <end position="52"/>
    </location>
</feature>
<feature type="disulfide bond" evidence="2">
    <location>
        <begin position="40"/>
        <end position="59"/>
    </location>
</feature>
<feature type="sequence conflict" description="In Ref. 2; AEJ31978." evidence="5" ref="2">
    <original>S</original>
    <variation>V</variation>
    <location>
        <position position="63"/>
    </location>
</feature>
<evidence type="ECO:0000250" key="1"/>
<evidence type="ECO:0000250" key="2">
    <source>
        <dbReference type="UniProtKB" id="Q9PWF3"/>
    </source>
</evidence>
<evidence type="ECO:0000269" key="3">
    <source>
    </source>
</evidence>
<evidence type="ECO:0000269" key="4">
    <source>
    </source>
</evidence>
<evidence type="ECO:0000305" key="5"/>
<evidence type="ECO:0000305" key="6">
    <source>
    </source>
</evidence>
<evidence type="ECO:0000305" key="7">
    <source>
    </source>
</evidence>
<keyword id="KW-0929">Antimicrobial</keyword>
<keyword id="KW-0903">Direct protein sequencing</keyword>
<keyword id="KW-1015">Disulfide bond</keyword>
<keyword id="KW-0872">Ion channel impairing toxin</keyword>
<keyword id="KW-0959">Myotoxin</keyword>
<keyword id="KW-0528">Neurotoxin</keyword>
<keyword id="KW-0632">Potassium channel impairing toxin</keyword>
<keyword id="KW-0964">Secreted</keyword>
<keyword id="KW-0732">Signal</keyword>
<keyword id="KW-0800">Toxin</keyword>
<keyword id="KW-1220">Voltage-gated potassium channel impairing toxin</keyword>
<name>MYX_CROAD</name>
<reference key="1">
    <citation type="journal article" date="2012" name="BMC Genomics">
        <title>The venom-gland transcriptome of the eastern diamondback rattlesnake (Crotalus adamanteus).</title>
        <authorList>
            <person name="Rokyta D.R."/>
            <person name="Lemmon A.R."/>
            <person name="Margres M.J."/>
            <person name="Aronow K."/>
        </authorList>
    </citation>
    <scope>NUCLEOTIDE SEQUENCE [MRNA]</scope>
    <source>
        <tissue>Venom gland</tissue>
    </source>
</reference>
<reference key="2">
    <citation type="journal article" date="2011" name="Toxicon">
        <title>A high-throughput venom-gland transcriptome for the eastern diamondback rattlesnake (Crotalus adamanteus) and evidence for pervasive positive selection across toxin classes.</title>
        <authorList>
            <person name="Rokyta D.R."/>
            <person name="Wray K.P."/>
            <person name="Lemmon A.R."/>
            <person name="Lemmon E.M."/>
            <person name="Caudle S.B."/>
        </authorList>
    </citation>
    <scope>NUCLEOTIDE SEQUENCE [MRNA] OF 1-63</scope>
</reference>
<reference key="3">
    <citation type="journal article" date="1991" name="Toxicon">
        <title>Amino acid sequence of a myotoxin from venom of the eastern diamondback rattlesnake (Crotalus adamanteus).</title>
        <authorList>
            <person name="Samejima Y."/>
            <person name="Aoki Y."/>
            <person name="Mebs D."/>
        </authorList>
    </citation>
    <scope>PROTEIN SEQUENCE OF 23-67</scope>
    <scope>TOXIC DOSE</scope>
    <scope>SUBCELLULAR LOCATION</scope>
    <source>
        <tissue>Venom</tissue>
    </source>
</reference>
<reference key="4">
    <citation type="journal article" date="2014" name="J. Proteomics">
        <title>Linking the transcriptome and proteome to characterize the venom of the eastern diamondback rattlesnake (Crotalus adamanteus).</title>
        <authorList>
            <person name="Margres M.J."/>
            <person name="McGivern J.J."/>
            <person name="Wray K.P."/>
            <person name="Seavy M."/>
            <person name="Calvin K."/>
            <person name="Rokyta D.R."/>
        </authorList>
    </citation>
    <scope>PROTEIN SEQUENCE OF 23-34</scope>
    <scope>IDENTIFICATION BY MASS SPECTROMETRY</scope>
    <source>
        <tissue>Venom</tissue>
    </source>
</reference>
<accession>P24330</accession>
<accession>F8S0Z6</accession>
<accession>J3RY57</accession>
<proteinExistence type="evidence at protein level"/>
<organism>
    <name type="scientific">Crotalus adamanteus</name>
    <name type="common">Eastern diamondback rattlesnake</name>
    <dbReference type="NCBI Taxonomy" id="8729"/>
    <lineage>
        <taxon>Eukaryota</taxon>
        <taxon>Metazoa</taxon>
        <taxon>Chordata</taxon>
        <taxon>Craniata</taxon>
        <taxon>Vertebrata</taxon>
        <taxon>Euteleostomi</taxon>
        <taxon>Lepidosauria</taxon>
        <taxon>Squamata</taxon>
        <taxon>Bifurcata</taxon>
        <taxon>Unidentata</taxon>
        <taxon>Episquamata</taxon>
        <taxon>Toxicofera</taxon>
        <taxon>Serpentes</taxon>
        <taxon>Colubroidea</taxon>
        <taxon>Viperidae</taxon>
        <taxon>Crotalinae</taxon>
        <taxon>Crotalus</taxon>
    </lineage>
</organism>